<proteinExistence type="inferred from homology"/>
<name>RL30_AGARV</name>
<gene>
    <name evidence="1" type="primary">rpmD</name>
    <name type="ordered locus">EUBREC_0435</name>
</gene>
<keyword id="KW-0687">Ribonucleoprotein</keyword>
<keyword id="KW-0689">Ribosomal protein</keyword>
<reference key="1">
    <citation type="journal article" date="2009" name="Proc. Natl. Acad. Sci. U.S.A.">
        <title>Characterizing a model human gut microbiota composed of members of its two dominant bacterial phyla.</title>
        <authorList>
            <person name="Mahowald M.A."/>
            <person name="Rey F.E."/>
            <person name="Seedorf H."/>
            <person name="Turnbaugh P.J."/>
            <person name="Fulton R.S."/>
            <person name="Wollam A."/>
            <person name="Shah N."/>
            <person name="Wang C."/>
            <person name="Magrini V."/>
            <person name="Wilson R.K."/>
            <person name="Cantarel B.L."/>
            <person name="Coutinho P.M."/>
            <person name="Henrissat B."/>
            <person name="Crock L.W."/>
            <person name="Russell A."/>
            <person name="Verberkmoes N.C."/>
            <person name="Hettich R.L."/>
            <person name="Gordon J.I."/>
        </authorList>
    </citation>
    <scope>NUCLEOTIDE SEQUENCE [LARGE SCALE GENOMIC DNA]</scope>
    <source>
        <strain>ATCC 33656 / DSM 3377 / JCM 17463 / KCTC 5835 / LMG 30912 / VPI 0990</strain>
    </source>
</reference>
<accession>C4ZBT6</accession>
<comment type="subunit">
    <text evidence="1">Part of the 50S ribosomal subunit.</text>
</comment>
<comment type="similarity">
    <text evidence="1">Belongs to the universal ribosomal protein uL30 family.</text>
</comment>
<organism>
    <name type="scientific">Agathobacter rectalis (strain ATCC 33656 / DSM 3377 / JCM 17463 / KCTC 5835 / VPI 0990)</name>
    <name type="common">Eubacterium rectale</name>
    <dbReference type="NCBI Taxonomy" id="515619"/>
    <lineage>
        <taxon>Bacteria</taxon>
        <taxon>Bacillati</taxon>
        <taxon>Bacillota</taxon>
        <taxon>Clostridia</taxon>
        <taxon>Lachnospirales</taxon>
        <taxon>Lachnospiraceae</taxon>
        <taxon>Agathobacter</taxon>
    </lineage>
</organism>
<sequence length="60" mass="6389">MADRVKVTLIKSTIGAVPKNKKTIEALGLTKLGKTVELPNNAATQGAVRKVAPYVKVEEV</sequence>
<feature type="chain" id="PRO_1000215061" description="Large ribosomal subunit protein uL30">
    <location>
        <begin position="1"/>
        <end position="60"/>
    </location>
</feature>
<protein>
    <recommendedName>
        <fullName evidence="1">Large ribosomal subunit protein uL30</fullName>
    </recommendedName>
    <alternativeName>
        <fullName evidence="2">50S ribosomal protein L30</fullName>
    </alternativeName>
</protein>
<evidence type="ECO:0000255" key="1">
    <source>
        <dbReference type="HAMAP-Rule" id="MF_01371"/>
    </source>
</evidence>
<evidence type="ECO:0000305" key="2"/>
<dbReference type="EMBL" id="CP001107">
    <property type="protein sequence ID" value="ACR74226.1"/>
    <property type="molecule type" value="Genomic_DNA"/>
</dbReference>
<dbReference type="RefSeq" id="WP_012741343.1">
    <property type="nucleotide sequence ID" value="NZ_CAXSYD010000003.1"/>
</dbReference>
<dbReference type="SMR" id="C4ZBT6"/>
<dbReference type="STRING" id="515619.EUBREC_0435"/>
<dbReference type="PaxDb" id="515619-EUBREC_0435"/>
<dbReference type="GeneID" id="86987346"/>
<dbReference type="KEGG" id="ere:EUBREC_0435"/>
<dbReference type="HOGENOM" id="CLU_131047_2_1_9"/>
<dbReference type="Proteomes" id="UP000001477">
    <property type="component" value="Chromosome"/>
</dbReference>
<dbReference type="GO" id="GO:0015934">
    <property type="term" value="C:large ribosomal subunit"/>
    <property type="evidence" value="ECO:0007669"/>
    <property type="project" value="InterPro"/>
</dbReference>
<dbReference type="GO" id="GO:0003735">
    <property type="term" value="F:structural constituent of ribosome"/>
    <property type="evidence" value="ECO:0007669"/>
    <property type="project" value="InterPro"/>
</dbReference>
<dbReference type="GO" id="GO:0006412">
    <property type="term" value="P:translation"/>
    <property type="evidence" value="ECO:0007669"/>
    <property type="project" value="UniProtKB-UniRule"/>
</dbReference>
<dbReference type="CDD" id="cd01658">
    <property type="entry name" value="Ribosomal_L30"/>
    <property type="match status" value="1"/>
</dbReference>
<dbReference type="Gene3D" id="3.30.1390.20">
    <property type="entry name" value="Ribosomal protein L30, ferredoxin-like fold domain"/>
    <property type="match status" value="1"/>
</dbReference>
<dbReference type="HAMAP" id="MF_01371_B">
    <property type="entry name" value="Ribosomal_uL30_B"/>
    <property type="match status" value="1"/>
</dbReference>
<dbReference type="InterPro" id="IPR036919">
    <property type="entry name" value="Ribo_uL30_ferredoxin-like_sf"/>
</dbReference>
<dbReference type="InterPro" id="IPR005996">
    <property type="entry name" value="Ribosomal_uL30_bac-type"/>
</dbReference>
<dbReference type="InterPro" id="IPR016082">
    <property type="entry name" value="Ribosomal_uL30_ferredoxin-like"/>
</dbReference>
<dbReference type="NCBIfam" id="TIGR01308">
    <property type="entry name" value="rpmD_bact"/>
    <property type="match status" value="1"/>
</dbReference>
<dbReference type="Pfam" id="PF00327">
    <property type="entry name" value="Ribosomal_L30"/>
    <property type="match status" value="1"/>
</dbReference>
<dbReference type="PIRSF" id="PIRSF002211">
    <property type="entry name" value="Ribosomal_L30_bac-type"/>
    <property type="match status" value="1"/>
</dbReference>
<dbReference type="SUPFAM" id="SSF55129">
    <property type="entry name" value="Ribosomal protein L30p/L7e"/>
    <property type="match status" value="1"/>
</dbReference>